<sequence>MTSIELLSPLIHDKFRFSTCCSTSSLLYLHASSFFRDRSFGFRQNPNRFVSNSSIQLPQSVPGSINQERFNLWQGFSRKKSTSSSRTIVNCQEGDQKASSSEGEGKTNKDKGRKQGKNELWWSKGKKWQWKPIIQAQEIGVMLLQLGIVMFVVRLLRPGIPLPGSEPRTQTTFMSVPYSDFLSKVNNDEVQKVEVDGFHVLFKLKDDGNLQESETSSSSIKLSESSETMLRSVAPTKRVVYSTTRPRDIKTPYEKMLENNVEFGSPDKRSGGFFNSGLIVLFYIAVLAGLLHRFPVNFSQSTTGQLRTRKSGGPGGGKVSGDGETITFADVAGVDEAKEELEEIVEFLKNPDRYVRLGARPPRGVLLVGLPGTGKTLLAKAVAGESDVPFISCSASEFVELYVGMGASRVRDLFARAKKEAPSIIFIDEIDAVAKSRDGKFRMVSNDEREQTLNQLLTEMDGFDSSSAVIVLGATNRADVLDPALRRPGRFDRVVTVESPDKVGRESILKVHVSKKELPLGDDVNLASIASMTTGFTGADLANLVNEAALLAGRKSKMTVDKIDFIHAVERSIAGIEKKTARLKGSEKAVVARHEAGHAVVGTAVASLLSGQSRVEKLSILPRSGGALGFTYIPPTHEDRYLLFIDELHGRLVTLLGGRAAEEVVYSGRISTGALDDIRRATDMAYKAVAEYGLNEKIGPVSVATLSAGGIDDSGGSPWGRDQGHLVDLVQREVTNLLQSALDVALTVVRANPDVLEGLGAQLEDEEKVEGEELQKWLNRVVPSEELAVFIKGKQTALLPAQASSS</sequence>
<dbReference type="EC" id="3.4.24.-"/>
<dbReference type="EMBL" id="AB016885">
    <property type="protein sequence ID" value="BAB09632.1"/>
    <property type="molecule type" value="Genomic_DNA"/>
</dbReference>
<dbReference type="EMBL" id="CP002688">
    <property type="protein sequence ID" value="AED97112.1"/>
    <property type="molecule type" value="Genomic_DNA"/>
</dbReference>
<dbReference type="EMBL" id="AY059856">
    <property type="protein sequence ID" value="AAL24338.1"/>
    <property type="molecule type" value="mRNA"/>
</dbReference>
<dbReference type="RefSeq" id="NP_568892.1">
    <property type="nucleotide sequence ID" value="NM_125277.4"/>
</dbReference>
<dbReference type="SMR" id="Q9FIM2"/>
<dbReference type="FunCoup" id="Q9FIM2">
    <property type="interactions" value="451"/>
</dbReference>
<dbReference type="STRING" id="3702.Q9FIM2"/>
<dbReference type="MEROPS" id="M41.A03"/>
<dbReference type="PaxDb" id="3702-AT5G58870.1"/>
<dbReference type="ProteomicsDB" id="228888"/>
<dbReference type="EnsemblPlants" id="AT5G58870.1">
    <property type="protein sequence ID" value="AT5G58870.1"/>
    <property type="gene ID" value="AT5G58870"/>
</dbReference>
<dbReference type="GeneID" id="836004"/>
<dbReference type="Gramene" id="AT5G58870.1">
    <property type="protein sequence ID" value="AT5G58870.1"/>
    <property type="gene ID" value="AT5G58870"/>
</dbReference>
<dbReference type="KEGG" id="ath:AT5G58870"/>
<dbReference type="Araport" id="AT5G58870"/>
<dbReference type="TAIR" id="AT5G58870">
    <property type="gene designation" value="FTSH9"/>
</dbReference>
<dbReference type="eggNOG" id="KOG0731">
    <property type="taxonomic scope" value="Eukaryota"/>
</dbReference>
<dbReference type="HOGENOM" id="CLU_000688_23_3_1"/>
<dbReference type="InParanoid" id="Q9FIM2"/>
<dbReference type="OMA" id="GFETESM"/>
<dbReference type="PhylomeDB" id="Q9FIM2"/>
<dbReference type="BRENDA" id="3.4.24.B20">
    <property type="organism ID" value="399"/>
</dbReference>
<dbReference type="PRO" id="PR:Q9FIM2"/>
<dbReference type="Proteomes" id="UP000006548">
    <property type="component" value="Chromosome 5"/>
</dbReference>
<dbReference type="ExpressionAtlas" id="Q9FIM2">
    <property type="expression patterns" value="baseline and differential"/>
</dbReference>
<dbReference type="GO" id="GO:0009507">
    <property type="term" value="C:chloroplast"/>
    <property type="evidence" value="ECO:0000314"/>
    <property type="project" value="TAIR"/>
</dbReference>
<dbReference type="GO" id="GO:0009941">
    <property type="term" value="C:chloroplast envelope"/>
    <property type="evidence" value="ECO:0007005"/>
    <property type="project" value="TAIR"/>
</dbReference>
<dbReference type="GO" id="GO:0009535">
    <property type="term" value="C:chloroplast thylakoid membrane"/>
    <property type="evidence" value="ECO:0007669"/>
    <property type="project" value="UniProtKB-SubCell"/>
</dbReference>
<dbReference type="GO" id="GO:0009536">
    <property type="term" value="C:plastid"/>
    <property type="evidence" value="ECO:0007005"/>
    <property type="project" value="TAIR"/>
</dbReference>
<dbReference type="GO" id="GO:0005524">
    <property type="term" value="F:ATP binding"/>
    <property type="evidence" value="ECO:0007669"/>
    <property type="project" value="UniProtKB-KW"/>
</dbReference>
<dbReference type="GO" id="GO:0016887">
    <property type="term" value="F:ATP hydrolysis activity"/>
    <property type="evidence" value="ECO:0007669"/>
    <property type="project" value="InterPro"/>
</dbReference>
<dbReference type="GO" id="GO:0004176">
    <property type="term" value="F:ATP-dependent peptidase activity"/>
    <property type="evidence" value="ECO:0000250"/>
    <property type="project" value="TAIR"/>
</dbReference>
<dbReference type="GO" id="GO:0046872">
    <property type="term" value="F:metal ion binding"/>
    <property type="evidence" value="ECO:0007669"/>
    <property type="project" value="UniProtKB-KW"/>
</dbReference>
<dbReference type="GO" id="GO:0004222">
    <property type="term" value="F:metalloendopeptidase activity"/>
    <property type="evidence" value="ECO:0007669"/>
    <property type="project" value="InterPro"/>
</dbReference>
<dbReference type="GO" id="GO:0006508">
    <property type="term" value="P:proteolysis"/>
    <property type="evidence" value="ECO:0007669"/>
    <property type="project" value="UniProtKB-KW"/>
</dbReference>
<dbReference type="CDD" id="cd19501">
    <property type="entry name" value="RecA-like_FtsH"/>
    <property type="match status" value="1"/>
</dbReference>
<dbReference type="FunFam" id="1.10.8.60:FF:000001">
    <property type="entry name" value="ATP-dependent zinc metalloprotease FtsH"/>
    <property type="match status" value="1"/>
</dbReference>
<dbReference type="FunFam" id="1.20.58.760:FF:000006">
    <property type="entry name" value="ATP-dependent zinc metalloprotease FTSH 7, chloroplastic"/>
    <property type="match status" value="1"/>
</dbReference>
<dbReference type="FunFam" id="3.40.50.300:FF:000352">
    <property type="entry name" value="ATP-dependent zinc metalloprotease FTSH 7, chloroplastic"/>
    <property type="match status" value="1"/>
</dbReference>
<dbReference type="Gene3D" id="1.10.8.60">
    <property type="match status" value="1"/>
</dbReference>
<dbReference type="Gene3D" id="3.30.720.210">
    <property type="match status" value="1"/>
</dbReference>
<dbReference type="Gene3D" id="3.40.50.300">
    <property type="entry name" value="P-loop containing nucleotide triphosphate hydrolases"/>
    <property type="match status" value="1"/>
</dbReference>
<dbReference type="Gene3D" id="1.20.58.760">
    <property type="entry name" value="Peptidase M41"/>
    <property type="match status" value="1"/>
</dbReference>
<dbReference type="HAMAP" id="MF_01458">
    <property type="entry name" value="FtsH"/>
    <property type="match status" value="1"/>
</dbReference>
<dbReference type="InterPro" id="IPR003593">
    <property type="entry name" value="AAA+_ATPase"/>
</dbReference>
<dbReference type="InterPro" id="IPR041569">
    <property type="entry name" value="AAA_lid_3"/>
</dbReference>
<dbReference type="InterPro" id="IPR003959">
    <property type="entry name" value="ATPase_AAA_core"/>
</dbReference>
<dbReference type="InterPro" id="IPR003960">
    <property type="entry name" value="ATPase_AAA_CS"/>
</dbReference>
<dbReference type="InterPro" id="IPR005936">
    <property type="entry name" value="FtsH"/>
</dbReference>
<dbReference type="InterPro" id="IPR027417">
    <property type="entry name" value="P-loop_NTPase"/>
</dbReference>
<dbReference type="InterPro" id="IPR000642">
    <property type="entry name" value="Peptidase_M41"/>
</dbReference>
<dbReference type="InterPro" id="IPR037219">
    <property type="entry name" value="Peptidase_M41-like"/>
</dbReference>
<dbReference type="NCBIfam" id="TIGR01241">
    <property type="entry name" value="FtsH_fam"/>
    <property type="match status" value="1"/>
</dbReference>
<dbReference type="PANTHER" id="PTHR23076:SF130">
    <property type="entry name" value="ATP-DEPENDENT ZINC METALLOPROTEASE FTSH 9, CHLOROPLASTIC"/>
    <property type="match status" value="1"/>
</dbReference>
<dbReference type="PANTHER" id="PTHR23076">
    <property type="entry name" value="METALLOPROTEASE M41 FTSH"/>
    <property type="match status" value="1"/>
</dbReference>
<dbReference type="Pfam" id="PF00004">
    <property type="entry name" value="AAA"/>
    <property type="match status" value="1"/>
</dbReference>
<dbReference type="Pfam" id="PF17862">
    <property type="entry name" value="AAA_lid_3"/>
    <property type="match status" value="1"/>
</dbReference>
<dbReference type="Pfam" id="PF01434">
    <property type="entry name" value="Peptidase_M41"/>
    <property type="match status" value="1"/>
</dbReference>
<dbReference type="SMART" id="SM00382">
    <property type="entry name" value="AAA"/>
    <property type="match status" value="1"/>
</dbReference>
<dbReference type="SUPFAM" id="SSF140990">
    <property type="entry name" value="FtsH protease domain-like"/>
    <property type="match status" value="1"/>
</dbReference>
<dbReference type="SUPFAM" id="SSF52540">
    <property type="entry name" value="P-loop containing nucleoside triphosphate hydrolases"/>
    <property type="match status" value="1"/>
</dbReference>
<dbReference type="PROSITE" id="PS00674">
    <property type="entry name" value="AAA"/>
    <property type="match status" value="1"/>
</dbReference>
<proteinExistence type="evidence at transcript level"/>
<name>FTSH9_ARATH</name>
<gene>
    <name type="primary">FTSH9</name>
    <name type="ordered locus">At5g58870</name>
    <name type="ORF">K19M22.7</name>
</gene>
<keyword id="KW-0067">ATP-binding</keyword>
<keyword id="KW-0150">Chloroplast</keyword>
<keyword id="KW-0378">Hydrolase</keyword>
<keyword id="KW-0472">Membrane</keyword>
<keyword id="KW-0479">Metal-binding</keyword>
<keyword id="KW-0482">Metalloprotease</keyword>
<keyword id="KW-0547">Nucleotide-binding</keyword>
<keyword id="KW-0934">Plastid</keyword>
<keyword id="KW-0645">Protease</keyword>
<keyword id="KW-1185">Reference proteome</keyword>
<keyword id="KW-0793">Thylakoid</keyword>
<keyword id="KW-0809">Transit peptide</keyword>
<keyword id="KW-0812">Transmembrane</keyword>
<keyword id="KW-1133">Transmembrane helix</keyword>
<keyword id="KW-0862">Zinc</keyword>
<organism>
    <name type="scientific">Arabidopsis thaliana</name>
    <name type="common">Mouse-ear cress</name>
    <dbReference type="NCBI Taxonomy" id="3702"/>
    <lineage>
        <taxon>Eukaryota</taxon>
        <taxon>Viridiplantae</taxon>
        <taxon>Streptophyta</taxon>
        <taxon>Embryophyta</taxon>
        <taxon>Tracheophyta</taxon>
        <taxon>Spermatophyta</taxon>
        <taxon>Magnoliopsida</taxon>
        <taxon>eudicotyledons</taxon>
        <taxon>Gunneridae</taxon>
        <taxon>Pentapetalae</taxon>
        <taxon>rosids</taxon>
        <taxon>malvids</taxon>
        <taxon>Brassicales</taxon>
        <taxon>Brassicaceae</taxon>
        <taxon>Camelineae</taxon>
        <taxon>Arabidopsis</taxon>
    </lineage>
</organism>
<comment type="function">
    <text>Probable ATP-dependent zinc metallopeptidase.</text>
</comment>
<comment type="cofactor">
    <cofactor evidence="1">
        <name>Zn(2+)</name>
        <dbReference type="ChEBI" id="CHEBI:29105"/>
    </cofactor>
    <text evidence="1">Binds 1 zinc ion per subunit.</text>
</comment>
<comment type="subcellular location">
    <subcellularLocation>
        <location evidence="4">Plastid</location>
        <location evidence="4">Chloroplast thylakoid membrane</location>
        <topology evidence="4">Multi-pass membrane protein</topology>
        <orientation evidence="4">Stromal side</orientation>
    </subcellularLocation>
</comment>
<comment type="induction">
    <text evidence="5">By high light.</text>
</comment>
<comment type="similarity">
    <text evidence="6">In the N-terminal section; belongs to the AAA ATPase family.</text>
</comment>
<comment type="similarity">
    <text evidence="6">In the C-terminal section; belongs to the peptidase M41 family.</text>
</comment>
<evidence type="ECO:0000250" key="1"/>
<evidence type="ECO:0000255" key="2"/>
<evidence type="ECO:0000256" key="3">
    <source>
        <dbReference type="SAM" id="MobiDB-lite"/>
    </source>
</evidence>
<evidence type="ECO:0000269" key="4">
    <source>
    </source>
</evidence>
<evidence type="ECO:0000269" key="5">
    <source>
    </source>
</evidence>
<evidence type="ECO:0000305" key="6"/>
<accession>Q9FIM2</accession>
<protein>
    <recommendedName>
        <fullName>ATP-dependent zinc metalloprotease FTSH 9, chloroplastic</fullName>
        <shortName>AtFTSH9</shortName>
        <ecNumber>3.4.24.-</ecNumber>
    </recommendedName>
</protein>
<feature type="transit peptide" description="Chloroplast" evidence="2">
    <location>
        <begin position="1"/>
        <end position="62"/>
    </location>
</feature>
<feature type="transit peptide" description="Thylakoid" evidence="2">
    <location>
        <begin position="63"/>
        <end status="unknown"/>
    </location>
</feature>
<feature type="chain" id="PRO_0000341334" description="ATP-dependent zinc metalloprotease FTSH 9, chloroplastic">
    <location>
        <begin status="unknown"/>
        <end position="806"/>
    </location>
</feature>
<feature type="transmembrane region" description="Helical" evidence="2">
    <location>
        <begin position="133"/>
        <end position="153"/>
    </location>
</feature>
<feature type="transmembrane region" description="Helical" evidence="2">
    <location>
        <begin position="271"/>
        <end position="291"/>
    </location>
</feature>
<feature type="region of interest" description="Disordered" evidence="3">
    <location>
        <begin position="84"/>
        <end position="116"/>
    </location>
</feature>
<feature type="active site" evidence="1">
    <location>
        <position position="595"/>
    </location>
</feature>
<feature type="binding site" evidence="2">
    <location>
        <begin position="369"/>
        <end position="376"/>
    </location>
    <ligand>
        <name>ATP</name>
        <dbReference type="ChEBI" id="CHEBI:30616"/>
    </ligand>
</feature>
<feature type="binding site" evidence="1">
    <location>
        <position position="594"/>
    </location>
    <ligand>
        <name>Zn(2+)</name>
        <dbReference type="ChEBI" id="CHEBI:29105"/>
        <note>catalytic</note>
    </ligand>
</feature>
<feature type="binding site" evidence="1">
    <location>
        <position position="598"/>
    </location>
    <ligand>
        <name>Zn(2+)</name>
        <dbReference type="ChEBI" id="CHEBI:29105"/>
        <note>catalytic</note>
    </ligand>
</feature>
<feature type="binding site" evidence="1">
    <location>
        <position position="677"/>
    </location>
    <ligand>
        <name>Zn(2+)</name>
        <dbReference type="ChEBI" id="CHEBI:29105"/>
        <note>catalytic</note>
    </ligand>
</feature>
<reference key="1">
    <citation type="journal article" date="1998" name="DNA Res.">
        <title>Structural analysis of Arabidopsis thaliana chromosome 5. VIII. Sequence features of the regions of 1,081,958 bp covered by seventeen physically assigned P1 and TAC clones.</title>
        <authorList>
            <person name="Asamizu E."/>
            <person name="Sato S."/>
            <person name="Kaneko T."/>
            <person name="Nakamura Y."/>
            <person name="Kotani H."/>
            <person name="Miyajima N."/>
            <person name="Tabata S."/>
        </authorList>
    </citation>
    <scope>NUCLEOTIDE SEQUENCE [LARGE SCALE GENOMIC DNA]</scope>
    <source>
        <strain>cv. Columbia</strain>
    </source>
</reference>
<reference key="2">
    <citation type="journal article" date="2017" name="Plant J.">
        <title>Araport11: a complete reannotation of the Arabidopsis thaliana reference genome.</title>
        <authorList>
            <person name="Cheng C.Y."/>
            <person name="Krishnakumar V."/>
            <person name="Chan A.P."/>
            <person name="Thibaud-Nissen F."/>
            <person name="Schobel S."/>
            <person name="Town C.D."/>
        </authorList>
    </citation>
    <scope>GENOME REANNOTATION</scope>
    <source>
        <strain>cv. Columbia</strain>
    </source>
</reference>
<reference key="3">
    <citation type="journal article" date="2003" name="Science">
        <title>Empirical analysis of transcriptional activity in the Arabidopsis genome.</title>
        <authorList>
            <person name="Yamada K."/>
            <person name="Lim J."/>
            <person name="Dale J.M."/>
            <person name="Chen H."/>
            <person name="Shinn P."/>
            <person name="Palm C.J."/>
            <person name="Southwick A.M."/>
            <person name="Wu H.C."/>
            <person name="Kim C.J."/>
            <person name="Nguyen M."/>
            <person name="Pham P.K."/>
            <person name="Cheuk R.F."/>
            <person name="Karlin-Newmann G."/>
            <person name="Liu S.X."/>
            <person name="Lam B."/>
            <person name="Sakano H."/>
            <person name="Wu T."/>
            <person name="Yu G."/>
            <person name="Miranda M."/>
            <person name="Quach H.L."/>
            <person name="Tripp M."/>
            <person name="Chang C.H."/>
            <person name="Lee J.M."/>
            <person name="Toriumi M.J."/>
            <person name="Chan M.M."/>
            <person name="Tang C.C."/>
            <person name="Onodera C.S."/>
            <person name="Deng J.M."/>
            <person name="Akiyama K."/>
            <person name="Ansari Y."/>
            <person name="Arakawa T."/>
            <person name="Banh J."/>
            <person name="Banno F."/>
            <person name="Bowser L."/>
            <person name="Brooks S.Y."/>
            <person name="Carninci P."/>
            <person name="Chao Q."/>
            <person name="Choy N."/>
            <person name="Enju A."/>
            <person name="Goldsmith A.D."/>
            <person name="Gurjal M."/>
            <person name="Hansen N.F."/>
            <person name="Hayashizaki Y."/>
            <person name="Johnson-Hopson C."/>
            <person name="Hsuan V.W."/>
            <person name="Iida K."/>
            <person name="Karnes M."/>
            <person name="Khan S."/>
            <person name="Koesema E."/>
            <person name="Ishida J."/>
            <person name="Jiang P.X."/>
            <person name="Jones T."/>
            <person name="Kawai J."/>
            <person name="Kamiya A."/>
            <person name="Meyers C."/>
            <person name="Nakajima M."/>
            <person name="Narusaka M."/>
            <person name="Seki M."/>
            <person name="Sakurai T."/>
            <person name="Satou M."/>
            <person name="Tamse R."/>
            <person name="Vaysberg M."/>
            <person name="Wallender E.K."/>
            <person name="Wong C."/>
            <person name="Yamamura Y."/>
            <person name="Yuan S."/>
            <person name="Shinozaki K."/>
            <person name="Davis R.W."/>
            <person name="Theologis A."/>
            <person name="Ecker J.R."/>
        </authorList>
    </citation>
    <scope>NUCLEOTIDE SEQUENCE [LARGE SCALE MRNA]</scope>
    <source>
        <strain>cv. Columbia</strain>
    </source>
</reference>
<reference key="4">
    <citation type="journal article" date="2001" name="Plant Physiol.">
        <title>Chloroplast and mitochondrial proteases in Arabidopsis. A proposed nomenclature.</title>
        <authorList>
            <person name="Adam Z."/>
            <person name="Adamska I."/>
            <person name="Nakabayashi K."/>
            <person name="Ostersetzer O."/>
            <person name="Haussuhl K."/>
            <person name="Manuell A."/>
            <person name="Zheng B."/>
            <person name="Vallon O."/>
            <person name="Rodermel S.R."/>
            <person name="Shinozaki K."/>
            <person name="Clarke A.K."/>
        </authorList>
    </citation>
    <scope>GENE FAMILY</scope>
    <scope>NOMENCLATURE</scope>
</reference>
<reference key="5">
    <citation type="journal article" date="2003" name="Plant Cell">
        <title>Coordinated regulation and complex formation of yellow variegated1 and yellow variegated2, chloroplastic FtsH metalloproteases involved in the repair cycle of photosystem II in Arabidopsis thylakoid membranes.</title>
        <authorList>
            <person name="Sakamoto W."/>
            <person name="Zaltsman A."/>
            <person name="Adam Z."/>
            <person name="Takahashi Y."/>
        </authorList>
    </citation>
    <scope>SUBCELLULAR LOCATION</scope>
</reference>
<reference key="6">
    <citation type="journal article" date="2004" name="Plant Physiol.">
        <title>Expression in multigene families. Analysis of chloroplast and mitochondrial proteases.</title>
        <authorList>
            <person name="Sinvany-Villalobo G."/>
            <person name="Davydov O."/>
            <person name="Ben-Ari G."/>
            <person name="Zaltsman A."/>
            <person name="Raskind A."/>
            <person name="Adam Z."/>
        </authorList>
    </citation>
    <scope>INDUCTION BY HIGH LIGHT</scope>
</reference>
<reference key="7">
    <citation type="journal article" date="2004" name="Plant J.">
        <title>The Arabidopsis FtsH metalloprotease gene family: interchangeability of subunits in chloroplast oligomeric complexes.</title>
        <authorList>
            <person name="Yu F."/>
            <person name="Park S."/>
            <person name="Rodermel S.R."/>
        </authorList>
    </citation>
    <scope>GENE FAMILY</scope>
    <scope>NOMENCLATURE</scope>
</reference>